<feature type="signal peptide" evidence="3">
    <location>
        <begin position="1"/>
        <end position="17"/>
    </location>
</feature>
<feature type="propeptide" id="PRO_0000028766" description="Activation peptide" evidence="1">
    <location>
        <begin position="18"/>
        <end position="99"/>
    </location>
</feature>
<feature type="chain" id="PRO_0000028767" description="Stromelysin-2">
    <location>
        <begin position="100"/>
        <end position="476"/>
    </location>
</feature>
<feature type="repeat" description="Hemopexin 1">
    <location>
        <begin position="286"/>
        <end position="335"/>
    </location>
</feature>
<feature type="repeat" description="Hemopexin 2">
    <location>
        <begin position="336"/>
        <end position="382"/>
    </location>
</feature>
<feature type="repeat" description="Hemopexin 3">
    <location>
        <begin position="384"/>
        <end position="432"/>
    </location>
</feature>
<feature type="repeat" description="Hemopexin 4">
    <location>
        <begin position="433"/>
        <end position="476"/>
    </location>
</feature>
<feature type="short sequence motif" description="Cysteine switch" evidence="1">
    <location>
        <begin position="90"/>
        <end position="97"/>
    </location>
</feature>
<feature type="active site" evidence="2">
    <location>
        <position position="219"/>
    </location>
</feature>
<feature type="binding site" description="in inhibited form" evidence="1">
    <location>
        <position position="92"/>
    </location>
    <ligand>
        <name>Zn(2+)</name>
        <dbReference type="ChEBI" id="CHEBI:29105"/>
        <note>catalytic</note>
    </ligand>
</feature>
<feature type="binding site" evidence="1">
    <location>
        <position position="168"/>
    </location>
    <ligand>
        <name>Zn(2+)</name>
        <dbReference type="ChEBI" id="CHEBI:29105"/>
        <label>1</label>
    </ligand>
</feature>
<feature type="binding site" evidence="1">
    <location>
        <position position="170"/>
    </location>
    <ligand>
        <name>Zn(2+)</name>
        <dbReference type="ChEBI" id="CHEBI:29105"/>
        <label>1</label>
    </ligand>
</feature>
<feature type="binding site" evidence="1">
    <location>
        <position position="183"/>
    </location>
    <ligand>
        <name>Zn(2+)</name>
        <dbReference type="ChEBI" id="CHEBI:29105"/>
        <label>1</label>
    </ligand>
</feature>
<feature type="binding site" evidence="1">
    <location>
        <position position="196"/>
    </location>
    <ligand>
        <name>Zn(2+)</name>
        <dbReference type="ChEBI" id="CHEBI:29105"/>
        <label>1</label>
    </ligand>
</feature>
<feature type="binding site" evidence="1">
    <location>
        <position position="218"/>
    </location>
    <ligand>
        <name>Zn(2+)</name>
        <dbReference type="ChEBI" id="CHEBI:29105"/>
        <label>2</label>
        <note>catalytic</note>
    </ligand>
</feature>
<feature type="binding site" evidence="1">
    <location>
        <position position="222"/>
    </location>
    <ligand>
        <name>Zn(2+)</name>
        <dbReference type="ChEBI" id="CHEBI:29105"/>
        <label>2</label>
        <note>catalytic</note>
    </ligand>
</feature>
<feature type="binding site" evidence="1">
    <location>
        <position position="228"/>
    </location>
    <ligand>
        <name>Zn(2+)</name>
        <dbReference type="ChEBI" id="CHEBI:29105"/>
        <label>2</label>
        <note>catalytic</note>
    </ligand>
</feature>
<feature type="disulfide bond" evidence="1">
    <location>
        <begin position="289"/>
        <end position="476"/>
    </location>
</feature>
<reference key="1">
    <citation type="journal article" date="1997" name="Gene">
        <title>cDNA cloning and expression of the gene encoding murine stromelysin-2 (MMP-10).</title>
        <authorList>
            <person name="Madlener M."/>
            <person name="Werner S."/>
        </authorList>
    </citation>
    <scope>NUCLEOTIDE SEQUENCE [MRNA]</scope>
    <source>
        <strain>BALB/cJ</strain>
    </source>
</reference>
<reference key="2">
    <citation type="journal article" date="2005" name="Science">
        <title>The transcriptional landscape of the mammalian genome.</title>
        <authorList>
            <person name="Carninci P."/>
            <person name="Kasukawa T."/>
            <person name="Katayama S."/>
            <person name="Gough J."/>
            <person name="Frith M.C."/>
            <person name="Maeda N."/>
            <person name="Oyama R."/>
            <person name="Ravasi T."/>
            <person name="Lenhard B."/>
            <person name="Wells C."/>
            <person name="Kodzius R."/>
            <person name="Shimokawa K."/>
            <person name="Bajic V.B."/>
            <person name="Brenner S.E."/>
            <person name="Batalov S."/>
            <person name="Forrest A.R."/>
            <person name="Zavolan M."/>
            <person name="Davis M.J."/>
            <person name="Wilming L.G."/>
            <person name="Aidinis V."/>
            <person name="Allen J.E."/>
            <person name="Ambesi-Impiombato A."/>
            <person name="Apweiler R."/>
            <person name="Aturaliya R.N."/>
            <person name="Bailey T.L."/>
            <person name="Bansal M."/>
            <person name="Baxter L."/>
            <person name="Beisel K.W."/>
            <person name="Bersano T."/>
            <person name="Bono H."/>
            <person name="Chalk A.M."/>
            <person name="Chiu K.P."/>
            <person name="Choudhary V."/>
            <person name="Christoffels A."/>
            <person name="Clutterbuck D.R."/>
            <person name="Crowe M.L."/>
            <person name="Dalla E."/>
            <person name="Dalrymple B.P."/>
            <person name="de Bono B."/>
            <person name="Della Gatta G."/>
            <person name="di Bernardo D."/>
            <person name="Down T."/>
            <person name="Engstrom P."/>
            <person name="Fagiolini M."/>
            <person name="Faulkner G."/>
            <person name="Fletcher C.F."/>
            <person name="Fukushima T."/>
            <person name="Furuno M."/>
            <person name="Futaki S."/>
            <person name="Gariboldi M."/>
            <person name="Georgii-Hemming P."/>
            <person name="Gingeras T.R."/>
            <person name="Gojobori T."/>
            <person name="Green R.E."/>
            <person name="Gustincich S."/>
            <person name="Harbers M."/>
            <person name="Hayashi Y."/>
            <person name="Hensch T.K."/>
            <person name="Hirokawa N."/>
            <person name="Hill D."/>
            <person name="Huminiecki L."/>
            <person name="Iacono M."/>
            <person name="Ikeo K."/>
            <person name="Iwama A."/>
            <person name="Ishikawa T."/>
            <person name="Jakt M."/>
            <person name="Kanapin A."/>
            <person name="Katoh M."/>
            <person name="Kawasawa Y."/>
            <person name="Kelso J."/>
            <person name="Kitamura H."/>
            <person name="Kitano H."/>
            <person name="Kollias G."/>
            <person name="Krishnan S.P."/>
            <person name="Kruger A."/>
            <person name="Kummerfeld S.K."/>
            <person name="Kurochkin I.V."/>
            <person name="Lareau L.F."/>
            <person name="Lazarevic D."/>
            <person name="Lipovich L."/>
            <person name="Liu J."/>
            <person name="Liuni S."/>
            <person name="McWilliam S."/>
            <person name="Madan Babu M."/>
            <person name="Madera M."/>
            <person name="Marchionni L."/>
            <person name="Matsuda H."/>
            <person name="Matsuzawa S."/>
            <person name="Miki H."/>
            <person name="Mignone F."/>
            <person name="Miyake S."/>
            <person name="Morris K."/>
            <person name="Mottagui-Tabar S."/>
            <person name="Mulder N."/>
            <person name="Nakano N."/>
            <person name="Nakauchi H."/>
            <person name="Ng P."/>
            <person name="Nilsson R."/>
            <person name="Nishiguchi S."/>
            <person name="Nishikawa S."/>
            <person name="Nori F."/>
            <person name="Ohara O."/>
            <person name="Okazaki Y."/>
            <person name="Orlando V."/>
            <person name="Pang K.C."/>
            <person name="Pavan W.J."/>
            <person name="Pavesi G."/>
            <person name="Pesole G."/>
            <person name="Petrovsky N."/>
            <person name="Piazza S."/>
            <person name="Reed J."/>
            <person name="Reid J.F."/>
            <person name="Ring B.Z."/>
            <person name="Ringwald M."/>
            <person name="Rost B."/>
            <person name="Ruan Y."/>
            <person name="Salzberg S.L."/>
            <person name="Sandelin A."/>
            <person name="Schneider C."/>
            <person name="Schoenbach C."/>
            <person name="Sekiguchi K."/>
            <person name="Semple C.A."/>
            <person name="Seno S."/>
            <person name="Sessa L."/>
            <person name="Sheng Y."/>
            <person name="Shibata Y."/>
            <person name="Shimada H."/>
            <person name="Shimada K."/>
            <person name="Silva D."/>
            <person name="Sinclair B."/>
            <person name="Sperling S."/>
            <person name="Stupka E."/>
            <person name="Sugiura K."/>
            <person name="Sultana R."/>
            <person name="Takenaka Y."/>
            <person name="Taki K."/>
            <person name="Tammoja K."/>
            <person name="Tan S.L."/>
            <person name="Tang S."/>
            <person name="Taylor M.S."/>
            <person name="Tegner J."/>
            <person name="Teichmann S.A."/>
            <person name="Ueda H.R."/>
            <person name="van Nimwegen E."/>
            <person name="Verardo R."/>
            <person name="Wei C.L."/>
            <person name="Yagi K."/>
            <person name="Yamanishi H."/>
            <person name="Zabarovsky E."/>
            <person name="Zhu S."/>
            <person name="Zimmer A."/>
            <person name="Hide W."/>
            <person name="Bult C."/>
            <person name="Grimmond S.M."/>
            <person name="Teasdale R.D."/>
            <person name="Liu E.T."/>
            <person name="Brusic V."/>
            <person name="Quackenbush J."/>
            <person name="Wahlestedt C."/>
            <person name="Mattick J.S."/>
            <person name="Hume D.A."/>
            <person name="Kai C."/>
            <person name="Sasaki D."/>
            <person name="Tomaru Y."/>
            <person name="Fukuda S."/>
            <person name="Kanamori-Katayama M."/>
            <person name="Suzuki M."/>
            <person name="Aoki J."/>
            <person name="Arakawa T."/>
            <person name="Iida J."/>
            <person name="Imamura K."/>
            <person name="Itoh M."/>
            <person name="Kato T."/>
            <person name="Kawaji H."/>
            <person name="Kawagashira N."/>
            <person name="Kawashima T."/>
            <person name="Kojima M."/>
            <person name="Kondo S."/>
            <person name="Konno H."/>
            <person name="Nakano K."/>
            <person name="Ninomiya N."/>
            <person name="Nishio T."/>
            <person name="Okada M."/>
            <person name="Plessy C."/>
            <person name="Shibata K."/>
            <person name="Shiraki T."/>
            <person name="Suzuki S."/>
            <person name="Tagami M."/>
            <person name="Waki K."/>
            <person name="Watahiki A."/>
            <person name="Okamura-Oho Y."/>
            <person name="Suzuki H."/>
            <person name="Kawai J."/>
            <person name="Hayashizaki Y."/>
        </authorList>
    </citation>
    <scope>NUCLEOTIDE SEQUENCE [LARGE SCALE MRNA]</scope>
    <source>
        <strain>C57BL/6J</strain>
        <tissue>Cecum</tissue>
    </source>
</reference>
<protein>
    <recommendedName>
        <fullName>Stromelysin-2</fullName>
        <shortName>SL-2</shortName>
        <ecNumber>3.4.24.22</ecNumber>
    </recommendedName>
    <alternativeName>
        <fullName>Matrix metalloproteinase-10</fullName>
        <shortName>MMP-10</shortName>
    </alternativeName>
    <alternativeName>
        <fullName>Transin-2</fullName>
    </alternativeName>
</protein>
<organism>
    <name type="scientific">Mus musculus</name>
    <name type="common">Mouse</name>
    <dbReference type="NCBI Taxonomy" id="10090"/>
    <lineage>
        <taxon>Eukaryota</taxon>
        <taxon>Metazoa</taxon>
        <taxon>Chordata</taxon>
        <taxon>Craniata</taxon>
        <taxon>Vertebrata</taxon>
        <taxon>Euteleostomi</taxon>
        <taxon>Mammalia</taxon>
        <taxon>Eutheria</taxon>
        <taxon>Euarchontoglires</taxon>
        <taxon>Glires</taxon>
        <taxon>Rodentia</taxon>
        <taxon>Myomorpha</taxon>
        <taxon>Muroidea</taxon>
        <taxon>Muridae</taxon>
        <taxon>Murinae</taxon>
        <taxon>Mus</taxon>
        <taxon>Mus</taxon>
    </lineage>
</organism>
<gene>
    <name type="primary">Mmp10</name>
</gene>
<evidence type="ECO:0000250" key="1"/>
<evidence type="ECO:0000255" key="2">
    <source>
        <dbReference type="PROSITE-ProRule" id="PRU10095"/>
    </source>
</evidence>
<evidence type="ECO:0000305" key="3"/>
<name>MMP10_MOUSE</name>
<accession>O55123</accession>
<keyword id="KW-0106">Calcium</keyword>
<keyword id="KW-0177">Collagen degradation</keyword>
<keyword id="KW-1015">Disulfide bond</keyword>
<keyword id="KW-0272">Extracellular matrix</keyword>
<keyword id="KW-0378">Hydrolase</keyword>
<keyword id="KW-0479">Metal-binding</keyword>
<keyword id="KW-0482">Metalloprotease</keyword>
<keyword id="KW-0645">Protease</keyword>
<keyword id="KW-1185">Reference proteome</keyword>
<keyword id="KW-0677">Repeat</keyword>
<keyword id="KW-0964">Secreted</keyword>
<keyword id="KW-0732">Signal</keyword>
<keyword id="KW-0862">Zinc</keyword>
<keyword id="KW-0865">Zymogen</keyword>
<comment type="function">
    <text>Can degrade fibronectin, gelatins of type I, III, IV, and V; weakly collagens III, IV, and V. Activates procollagenase.</text>
</comment>
<comment type="catalytic activity">
    <reaction>
        <text>Similar to stromelysin 1, but action on collagen types III, IV and V is weak.</text>
        <dbReference type="EC" id="3.4.24.22"/>
    </reaction>
</comment>
<comment type="cofactor">
    <cofactor evidence="1">
        <name>Zn(2+)</name>
        <dbReference type="ChEBI" id="CHEBI:29105"/>
    </cofactor>
    <text evidence="1">Binds 2 Zn(2+) ions per subunit.</text>
</comment>
<comment type="cofactor">
    <cofactor evidence="1">
        <name>Ca(2+)</name>
        <dbReference type="ChEBI" id="CHEBI:29108"/>
    </cofactor>
</comment>
<comment type="subcellular location">
    <subcellularLocation>
        <location evidence="3">Secreted</location>
        <location evidence="3">Extracellular space</location>
        <location evidence="3">Extracellular matrix</location>
    </subcellularLocation>
</comment>
<comment type="tissue specificity">
    <text>Expressed in small intestine. Weak levels in heart and lung.</text>
</comment>
<comment type="induction">
    <text>By wounding.</text>
</comment>
<comment type="domain">
    <text>The conserved cysteine present in the cysteine-switch motif binds the catalytic zinc ion, thus inhibiting the enzyme. The dissociation of the cysteine from the zinc ion upon the activation-peptide release activates the enzyme.</text>
</comment>
<comment type="similarity">
    <text evidence="3">Belongs to the peptidase M10A family.</text>
</comment>
<proteinExistence type="evidence at transcript level"/>
<dbReference type="EC" id="3.4.24.22"/>
<dbReference type="EMBL" id="Y13185">
    <property type="protein sequence ID" value="CAA73641.1"/>
    <property type="molecule type" value="mRNA"/>
</dbReference>
<dbReference type="EMBL" id="AK020292">
    <property type="protein sequence ID" value="BAB32058.1"/>
    <property type="molecule type" value="mRNA"/>
</dbReference>
<dbReference type="CCDS" id="CCDS22807.1"/>
<dbReference type="PIR" id="JC6505">
    <property type="entry name" value="JC6505"/>
</dbReference>
<dbReference type="RefSeq" id="NP_062344.1">
    <property type="nucleotide sequence ID" value="NM_019471.3"/>
</dbReference>
<dbReference type="SMR" id="O55123"/>
<dbReference type="FunCoup" id="O55123">
    <property type="interactions" value="38"/>
</dbReference>
<dbReference type="STRING" id="10090.ENSMUSP00000034488"/>
<dbReference type="MEROPS" id="M10.011"/>
<dbReference type="GlyGen" id="O55123">
    <property type="glycosylation" value="1 site"/>
</dbReference>
<dbReference type="iPTMnet" id="O55123"/>
<dbReference type="PhosphoSitePlus" id="O55123"/>
<dbReference type="PaxDb" id="10090-ENSMUSP00000034488"/>
<dbReference type="ProteomicsDB" id="291369"/>
<dbReference type="DNASU" id="17384"/>
<dbReference type="Ensembl" id="ENSMUST00000034488.4">
    <property type="protein sequence ID" value="ENSMUSP00000034488.3"/>
    <property type="gene ID" value="ENSMUSG00000047562.4"/>
</dbReference>
<dbReference type="GeneID" id="17384"/>
<dbReference type="KEGG" id="mmu:17384"/>
<dbReference type="UCSC" id="uc009ocq.2">
    <property type="organism name" value="mouse"/>
</dbReference>
<dbReference type="AGR" id="MGI:97007"/>
<dbReference type="CTD" id="4319"/>
<dbReference type="MGI" id="MGI:97007">
    <property type="gene designation" value="Mmp10"/>
</dbReference>
<dbReference type="VEuPathDB" id="HostDB:ENSMUSG00000047562"/>
<dbReference type="eggNOG" id="KOG1565">
    <property type="taxonomic scope" value="Eukaryota"/>
</dbReference>
<dbReference type="GeneTree" id="ENSGT00940000159759"/>
<dbReference type="HOGENOM" id="CLU_015489_6_0_1"/>
<dbReference type="InParanoid" id="O55123"/>
<dbReference type="OMA" id="NLEPEFH"/>
<dbReference type="OrthoDB" id="406838at2759"/>
<dbReference type="PhylomeDB" id="O55123"/>
<dbReference type="TreeFam" id="TF315428"/>
<dbReference type="BRENDA" id="3.4.24.22">
    <property type="organism ID" value="3474"/>
</dbReference>
<dbReference type="Reactome" id="R-MMU-1442490">
    <property type="pathway name" value="Collagen degradation"/>
</dbReference>
<dbReference type="Reactome" id="R-MMU-1474228">
    <property type="pathway name" value="Degradation of the extracellular matrix"/>
</dbReference>
<dbReference type="Reactome" id="R-MMU-1592389">
    <property type="pathway name" value="Activation of Matrix Metalloproteinases"/>
</dbReference>
<dbReference type="BioGRID-ORCS" id="17384">
    <property type="hits" value="0 hits in 78 CRISPR screens"/>
</dbReference>
<dbReference type="PRO" id="PR:O55123"/>
<dbReference type="Proteomes" id="UP000000589">
    <property type="component" value="Chromosome 9"/>
</dbReference>
<dbReference type="RNAct" id="O55123">
    <property type="molecule type" value="protein"/>
</dbReference>
<dbReference type="Bgee" id="ENSMUSG00000047562">
    <property type="expression patterns" value="Expressed in small intestine Peyer's patch and 16 other cell types or tissues"/>
</dbReference>
<dbReference type="ExpressionAtlas" id="O55123">
    <property type="expression patterns" value="baseline and differential"/>
</dbReference>
<dbReference type="GO" id="GO:0031012">
    <property type="term" value="C:extracellular matrix"/>
    <property type="evidence" value="ECO:0007669"/>
    <property type="project" value="InterPro"/>
</dbReference>
<dbReference type="GO" id="GO:0005576">
    <property type="term" value="C:extracellular region"/>
    <property type="evidence" value="ECO:0007669"/>
    <property type="project" value="UniProtKB-KW"/>
</dbReference>
<dbReference type="GO" id="GO:0004222">
    <property type="term" value="F:metalloendopeptidase activity"/>
    <property type="evidence" value="ECO:0007669"/>
    <property type="project" value="UniProtKB-EC"/>
</dbReference>
<dbReference type="GO" id="GO:0008270">
    <property type="term" value="F:zinc ion binding"/>
    <property type="evidence" value="ECO:0007669"/>
    <property type="project" value="InterPro"/>
</dbReference>
<dbReference type="GO" id="GO:0030574">
    <property type="term" value="P:collagen catabolic process"/>
    <property type="evidence" value="ECO:0007669"/>
    <property type="project" value="UniProtKB-KW"/>
</dbReference>
<dbReference type="GO" id="GO:0006508">
    <property type="term" value="P:proteolysis"/>
    <property type="evidence" value="ECO:0007669"/>
    <property type="project" value="UniProtKB-KW"/>
</dbReference>
<dbReference type="GO" id="GO:0030334">
    <property type="term" value="P:regulation of cell migration"/>
    <property type="evidence" value="ECO:0000315"/>
    <property type="project" value="MGI"/>
</dbReference>
<dbReference type="CDD" id="cd00094">
    <property type="entry name" value="HX"/>
    <property type="match status" value="1"/>
</dbReference>
<dbReference type="CDD" id="cd04278">
    <property type="entry name" value="ZnMc_MMP"/>
    <property type="match status" value="1"/>
</dbReference>
<dbReference type="FunFam" id="3.40.390.10:FF:000007">
    <property type="entry name" value="Collagenase 3"/>
    <property type="match status" value="1"/>
</dbReference>
<dbReference type="FunFam" id="2.110.10.10:FF:000002">
    <property type="entry name" value="Matrix metallopeptidase 3"/>
    <property type="match status" value="1"/>
</dbReference>
<dbReference type="Gene3D" id="3.40.390.10">
    <property type="entry name" value="Collagenase (Catalytic Domain)"/>
    <property type="match status" value="1"/>
</dbReference>
<dbReference type="Gene3D" id="2.110.10.10">
    <property type="entry name" value="Hemopexin-like domain"/>
    <property type="match status" value="1"/>
</dbReference>
<dbReference type="InterPro" id="IPR000585">
    <property type="entry name" value="Hemopexin-like_dom"/>
</dbReference>
<dbReference type="InterPro" id="IPR036375">
    <property type="entry name" value="Hemopexin-like_dom_sf"/>
</dbReference>
<dbReference type="InterPro" id="IPR018487">
    <property type="entry name" value="Hemopexin-like_repeat"/>
</dbReference>
<dbReference type="InterPro" id="IPR018486">
    <property type="entry name" value="Hemopexin_CS"/>
</dbReference>
<dbReference type="InterPro" id="IPR033739">
    <property type="entry name" value="M10A_MMP"/>
</dbReference>
<dbReference type="InterPro" id="IPR024079">
    <property type="entry name" value="MetalloPept_cat_dom_sf"/>
</dbReference>
<dbReference type="InterPro" id="IPR001818">
    <property type="entry name" value="Pept_M10_metallopeptidase"/>
</dbReference>
<dbReference type="InterPro" id="IPR021190">
    <property type="entry name" value="Pept_M10A"/>
</dbReference>
<dbReference type="InterPro" id="IPR021158">
    <property type="entry name" value="Pept_M10A_Zn_BS"/>
</dbReference>
<dbReference type="InterPro" id="IPR006026">
    <property type="entry name" value="Peptidase_Metallo"/>
</dbReference>
<dbReference type="InterPro" id="IPR002477">
    <property type="entry name" value="Peptidoglycan-bd-like"/>
</dbReference>
<dbReference type="InterPro" id="IPR036365">
    <property type="entry name" value="PGBD-like_sf"/>
</dbReference>
<dbReference type="PANTHER" id="PTHR10201">
    <property type="entry name" value="MATRIX METALLOPROTEINASE"/>
    <property type="match status" value="1"/>
</dbReference>
<dbReference type="PANTHER" id="PTHR10201:SF129">
    <property type="entry name" value="STROMELYSIN-2"/>
    <property type="match status" value="1"/>
</dbReference>
<dbReference type="Pfam" id="PF00045">
    <property type="entry name" value="Hemopexin"/>
    <property type="match status" value="4"/>
</dbReference>
<dbReference type="Pfam" id="PF00413">
    <property type="entry name" value="Peptidase_M10"/>
    <property type="match status" value="1"/>
</dbReference>
<dbReference type="Pfam" id="PF01471">
    <property type="entry name" value="PG_binding_1"/>
    <property type="match status" value="1"/>
</dbReference>
<dbReference type="PIRSF" id="PIRSF001191">
    <property type="entry name" value="Peptidase_M10A_matrix"/>
    <property type="match status" value="1"/>
</dbReference>
<dbReference type="PRINTS" id="PR00138">
    <property type="entry name" value="MATRIXIN"/>
</dbReference>
<dbReference type="SMART" id="SM00120">
    <property type="entry name" value="HX"/>
    <property type="match status" value="4"/>
</dbReference>
<dbReference type="SMART" id="SM00235">
    <property type="entry name" value="ZnMc"/>
    <property type="match status" value="1"/>
</dbReference>
<dbReference type="SUPFAM" id="SSF50923">
    <property type="entry name" value="Hemopexin-like domain"/>
    <property type="match status" value="1"/>
</dbReference>
<dbReference type="SUPFAM" id="SSF55486">
    <property type="entry name" value="Metalloproteases ('zincins'), catalytic domain"/>
    <property type="match status" value="1"/>
</dbReference>
<dbReference type="SUPFAM" id="SSF47090">
    <property type="entry name" value="PGBD-like"/>
    <property type="match status" value="1"/>
</dbReference>
<dbReference type="PROSITE" id="PS00546">
    <property type="entry name" value="CYSTEINE_SWITCH"/>
    <property type="match status" value="1"/>
</dbReference>
<dbReference type="PROSITE" id="PS00024">
    <property type="entry name" value="HEMOPEXIN"/>
    <property type="match status" value="1"/>
</dbReference>
<dbReference type="PROSITE" id="PS51642">
    <property type="entry name" value="HEMOPEXIN_2"/>
    <property type="match status" value="4"/>
</dbReference>
<dbReference type="PROSITE" id="PS00142">
    <property type="entry name" value="ZINC_PROTEASE"/>
    <property type="match status" value="1"/>
</dbReference>
<sequence>MEPLAILALLSLPICSAYPLHGAVTQGHPSMDLAQQYLEKYYNFKKNEKQIFKRKDSSPVVKKIQEMQKFLGLEMTGKLDSNTMELMHKPRCGVPDVGGFSTFPGSPKWRKSHITYRIVNYTPDLPRQSVDSAIEKALKVWEEVTPLTFSRISEGEADIMISFAVGEHGDFYPFDGPGQSLAHAYPPGPGFYGDVHFDDDEKWTLAPSGTNLFLVAAHELGHSLGLFHSDKKESLMYPVYRFSTSPANFHLSQDDIEGIQSLYGAGPSSDATVVPVLSVSPRPETPDKCDPALSFDSVSTLRGEVLFFKDRYFWRRSHWNPEPEFHLISAFWPTLPSDLDAAYEAHNTDSVLIFKGSQFWAVRGNEVQAGYPKGIHTLGFPPTVKKIDAAVFEKEKKKTYFFVGDKYWRFDETRHVMDKGFPRQITDDFPGIEPQVDAVLHEFGFFYFFRGSSQFEFDPNARTVTHILKSNSWLLC</sequence>